<accession>B5QVR2</accession>
<evidence type="ECO:0000255" key="1">
    <source>
        <dbReference type="HAMAP-Rule" id="MF_01431"/>
    </source>
</evidence>
<gene>
    <name evidence="1" type="primary">rihA</name>
    <name type="ordered locus">SEN0630</name>
</gene>
<dbReference type="EC" id="3.2.-.-" evidence="1"/>
<dbReference type="EMBL" id="AM933172">
    <property type="protein sequence ID" value="CAR32218.1"/>
    <property type="molecule type" value="Genomic_DNA"/>
</dbReference>
<dbReference type="RefSeq" id="WP_001207439.1">
    <property type="nucleotide sequence ID" value="NC_011294.1"/>
</dbReference>
<dbReference type="SMR" id="B5QVR2"/>
<dbReference type="KEGG" id="set:SEN0630"/>
<dbReference type="HOGENOM" id="CLU_036838_2_0_6"/>
<dbReference type="Proteomes" id="UP000000613">
    <property type="component" value="Chromosome"/>
</dbReference>
<dbReference type="GO" id="GO:0005829">
    <property type="term" value="C:cytosol"/>
    <property type="evidence" value="ECO:0007669"/>
    <property type="project" value="TreeGrafter"/>
</dbReference>
<dbReference type="GO" id="GO:0008477">
    <property type="term" value="F:purine nucleosidase activity"/>
    <property type="evidence" value="ECO:0007669"/>
    <property type="project" value="TreeGrafter"/>
</dbReference>
<dbReference type="GO" id="GO:0045437">
    <property type="term" value="F:uridine nucleosidase activity"/>
    <property type="evidence" value="ECO:0007669"/>
    <property type="project" value="InterPro"/>
</dbReference>
<dbReference type="GO" id="GO:0015949">
    <property type="term" value="P:nucleobase-containing small molecule interconversion"/>
    <property type="evidence" value="ECO:0007669"/>
    <property type="project" value="InterPro"/>
</dbReference>
<dbReference type="GO" id="GO:0006152">
    <property type="term" value="P:purine nucleoside catabolic process"/>
    <property type="evidence" value="ECO:0007669"/>
    <property type="project" value="TreeGrafter"/>
</dbReference>
<dbReference type="GO" id="GO:0006206">
    <property type="term" value="P:pyrimidine nucleobase metabolic process"/>
    <property type="evidence" value="ECO:0007669"/>
    <property type="project" value="UniProtKB-UniRule"/>
</dbReference>
<dbReference type="CDD" id="cd02651">
    <property type="entry name" value="nuc_hydro_IU_UC_XIUA"/>
    <property type="match status" value="1"/>
</dbReference>
<dbReference type="FunFam" id="3.90.245.10:FF:000001">
    <property type="entry name" value="Pyrimidine-specific ribonucleoside hydrolase RihA"/>
    <property type="match status" value="1"/>
</dbReference>
<dbReference type="Gene3D" id="3.90.245.10">
    <property type="entry name" value="Ribonucleoside hydrolase-like"/>
    <property type="match status" value="1"/>
</dbReference>
<dbReference type="HAMAP" id="MF_01431">
    <property type="entry name" value="Pyrim_hydro_RihA"/>
    <property type="match status" value="1"/>
</dbReference>
<dbReference type="InterPro" id="IPR015910">
    <property type="entry name" value="I/U_nuclsd_hydro_CS"/>
</dbReference>
<dbReference type="InterPro" id="IPR001910">
    <property type="entry name" value="Inosine/uridine_hydrolase_dom"/>
</dbReference>
<dbReference type="InterPro" id="IPR023186">
    <property type="entry name" value="IUNH"/>
</dbReference>
<dbReference type="InterPro" id="IPR022975">
    <property type="entry name" value="Pyrim_hydro_RihA"/>
</dbReference>
<dbReference type="InterPro" id="IPR036452">
    <property type="entry name" value="Ribo_hydro-like"/>
</dbReference>
<dbReference type="NCBIfam" id="NF007761">
    <property type="entry name" value="PRK10443.1"/>
    <property type="match status" value="1"/>
</dbReference>
<dbReference type="PANTHER" id="PTHR12304">
    <property type="entry name" value="INOSINE-URIDINE PREFERRING NUCLEOSIDE HYDROLASE"/>
    <property type="match status" value="1"/>
</dbReference>
<dbReference type="PANTHER" id="PTHR12304:SF4">
    <property type="entry name" value="URIDINE NUCLEOSIDASE"/>
    <property type="match status" value="1"/>
</dbReference>
<dbReference type="Pfam" id="PF01156">
    <property type="entry name" value="IU_nuc_hydro"/>
    <property type="match status" value="1"/>
</dbReference>
<dbReference type="SUPFAM" id="SSF53590">
    <property type="entry name" value="Nucleoside hydrolase"/>
    <property type="match status" value="1"/>
</dbReference>
<dbReference type="PROSITE" id="PS01247">
    <property type="entry name" value="IUNH"/>
    <property type="match status" value="1"/>
</dbReference>
<name>RIHA_SALEP</name>
<sequence length="311" mass="33772">MALPIIIDCDPGHDDAIALVLALASPELEVKAITSSAGNQTPEKTLRNVLRMLTLLKRPDIPVAGGAVKPLMRELIIADNVHGESGLNGPALPEPSFAPQSGTAVELMAKTLRESAQPVTIVSTGPQTNVALLLNSHPELHTKIARIVIMGGAMALGNWTPAAEFNIYVDPEAAEIVFQSGIPVVMAGLDVTHKAQIHAADIERFRAIGNPISTIVAELLDFFMEYHKDEKWGFVGAPLHDPCTIAWLLKPEIFTTVERWVGVETKGKYTQGMTVVDYYFLTGNKPNATVMVDVDRQGFVDLLAERLQYYA</sequence>
<feature type="chain" id="PRO_1000145800" description="Pyrimidine-specific ribonucleoside hydrolase RihA">
    <location>
        <begin position="1"/>
        <end position="311"/>
    </location>
</feature>
<feature type="active site" evidence="1">
    <location>
        <position position="240"/>
    </location>
</feature>
<reference key="1">
    <citation type="journal article" date="2008" name="Genome Res.">
        <title>Comparative genome analysis of Salmonella enteritidis PT4 and Salmonella gallinarum 287/91 provides insights into evolutionary and host adaptation pathways.</title>
        <authorList>
            <person name="Thomson N.R."/>
            <person name="Clayton D.J."/>
            <person name="Windhorst D."/>
            <person name="Vernikos G."/>
            <person name="Davidson S."/>
            <person name="Churcher C."/>
            <person name="Quail M.A."/>
            <person name="Stevens M."/>
            <person name="Jones M.A."/>
            <person name="Watson M."/>
            <person name="Barron A."/>
            <person name="Layton A."/>
            <person name="Pickard D."/>
            <person name="Kingsley R.A."/>
            <person name="Bignell A."/>
            <person name="Clark L."/>
            <person name="Harris B."/>
            <person name="Ormond D."/>
            <person name="Abdellah Z."/>
            <person name="Brooks K."/>
            <person name="Cherevach I."/>
            <person name="Chillingworth T."/>
            <person name="Woodward J."/>
            <person name="Norberczak H."/>
            <person name="Lord A."/>
            <person name="Arrowsmith C."/>
            <person name="Jagels K."/>
            <person name="Moule S."/>
            <person name="Mungall K."/>
            <person name="Saunders M."/>
            <person name="Whitehead S."/>
            <person name="Chabalgoity J.A."/>
            <person name="Maskell D."/>
            <person name="Humphreys T."/>
            <person name="Roberts M."/>
            <person name="Barrow P.A."/>
            <person name="Dougan G."/>
            <person name="Parkhill J."/>
        </authorList>
    </citation>
    <scope>NUCLEOTIDE SEQUENCE [LARGE SCALE GENOMIC DNA]</scope>
    <source>
        <strain>P125109</strain>
    </source>
</reference>
<keyword id="KW-0326">Glycosidase</keyword>
<keyword id="KW-0378">Hydrolase</keyword>
<protein>
    <recommendedName>
        <fullName evidence="1">Pyrimidine-specific ribonucleoside hydrolase RihA</fullName>
        <ecNumber evidence="1">3.2.-.-</ecNumber>
    </recommendedName>
    <alternativeName>
        <fullName evidence="1">Cytidine/uridine-specific hydrolase</fullName>
    </alternativeName>
</protein>
<proteinExistence type="inferred from homology"/>
<organism>
    <name type="scientific">Salmonella enteritidis PT4 (strain P125109)</name>
    <dbReference type="NCBI Taxonomy" id="550537"/>
    <lineage>
        <taxon>Bacteria</taxon>
        <taxon>Pseudomonadati</taxon>
        <taxon>Pseudomonadota</taxon>
        <taxon>Gammaproteobacteria</taxon>
        <taxon>Enterobacterales</taxon>
        <taxon>Enterobacteriaceae</taxon>
        <taxon>Salmonella</taxon>
    </lineage>
</organism>
<comment type="function">
    <text evidence="1">Hydrolyzes cytidine or uridine to ribose and cytosine or uracil, respectively.</text>
</comment>
<comment type="similarity">
    <text evidence="1">Belongs to the IUNH family. RihA subfamily.</text>
</comment>